<reference key="1">
    <citation type="journal article" date="2004" name="Nature">
        <title>Genome evolution in yeasts.</title>
        <authorList>
            <person name="Dujon B."/>
            <person name="Sherman D."/>
            <person name="Fischer G."/>
            <person name="Durrens P."/>
            <person name="Casaregola S."/>
            <person name="Lafontaine I."/>
            <person name="de Montigny J."/>
            <person name="Marck C."/>
            <person name="Neuveglise C."/>
            <person name="Talla E."/>
            <person name="Goffard N."/>
            <person name="Frangeul L."/>
            <person name="Aigle M."/>
            <person name="Anthouard V."/>
            <person name="Babour A."/>
            <person name="Barbe V."/>
            <person name="Barnay S."/>
            <person name="Blanchin S."/>
            <person name="Beckerich J.-M."/>
            <person name="Beyne E."/>
            <person name="Bleykasten C."/>
            <person name="Boisrame A."/>
            <person name="Boyer J."/>
            <person name="Cattolico L."/>
            <person name="Confanioleri F."/>
            <person name="de Daruvar A."/>
            <person name="Despons L."/>
            <person name="Fabre E."/>
            <person name="Fairhead C."/>
            <person name="Ferry-Dumazet H."/>
            <person name="Groppi A."/>
            <person name="Hantraye F."/>
            <person name="Hennequin C."/>
            <person name="Jauniaux N."/>
            <person name="Joyet P."/>
            <person name="Kachouri R."/>
            <person name="Kerrest A."/>
            <person name="Koszul R."/>
            <person name="Lemaire M."/>
            <person name="Lesur I."/>
            <person name="Ma L."/>
            <person name="Muller H."/>
            <person name="Nicaud J.-M."/>
            <person name="Nikolski M."/>
            <person name="Oztas S."/>
            <person name="Ozier-Kalogeropoulos O."/>
            <person name="Pellenz S."/>
            <person name="Potier S."/>
            <person name="Richard G.-F."/>
            <person name="Straub M.-L."/>
            <person name="Suleau A."/>
            <person name="Swennen D."/>
            <person name="Tekaia F."/>
            <person name="Wesolowski-Louvel M."/>
            <person name="Westhof E."/>
            <person name="Wirth B."/>
            <person name="Zeniou-Meyer M."/>
            <person name="Zivanovic Y."/>
            <person name="Bolotin-Fukuhara M."/>
            <person name="Thierry A."/>
            <person name="Bouchier C."/>
            <person name="Caudron B."/>
            <person name="Scarpelli C."/>
            <person name="Gaillardin C."/>
            <person name="Weissenbach J."/>
            <person name="Wincker P."/>
            <person name="Souciet J.-L."/>
        </authorList>
    </citation>
    <scope>NUCLEOTIDE SEQUENCE [LARGE SCALE GENOMIC DNA]</scope>
    <source>
        <strain>CLIB 122 / E 150</strain>
    </source>
</reference>
<protein>
    <recommendedName>
        <fullName>Mitochondrial inner membrane magnesium transporter MRS2</fullName>
    </recommendedName>
    <alternativeName>
        <fullName>RNA-splicing protein MRS2</fullName>
    </alternativeName>
</protein>
<feature type="transit peptide" description="Mitochondrion" evidence="2">
    <location>
        <begin position="1"/>
        <end status="unknown"/>
    </location>
</feature>
<feature type="chain" id="PRO_0000043239" description="Mitochondrial inner membrane magnesium transporter MRS2">
    <location>
        <begin status="unknown"/>
        <end position="419"/>
    </location>
</feature>
<feature type="transmembrane region" description="Helical" evidence="2">
    <location>
        <begin position="297"/>
        <end position="317"/>
    </location>
</feature>
<feature type="transmembrane region" description="Helical" evidence="2">
    <location>
        <begin position="328"/>
        <end position="348"/>
    </location>
</feature>
<feature type="short sequence motif" description="YGMN">
    <location>
        <begin position="314"/>
        <end position="317"/>
    </location>
</feature>
<keyword id="KW-0406">Ion transport</keyword>
<keyword id="KW-0460">Magnesium</keyword>
<keyword id="KW-0472">Membrane</keyword>
<keyword id="KW-0496">Mitochondrion</keyword>
<keyword id="KW-0999">Mitochondrion inner membrane</keyword>
<keyword id="KW-1185">Reference proteome</keyword>
<keyword id="KW-0809">Transit peptide</keyword>
<keyword id="KW-0812">Transmembrane</keyword>
<keyword id="KW-1133">Transmembrane helix</keyword>
<keyword id="KW-0813">Transport</keyword>
<proteinExistence type="inferred from homology"/>
<gene>
    <name type="primary">MRS2</name>
    <name type="ordered locus">YALI0F06248g</name>
</gene>
<accession>Q6C2P2</accession>
<sequence>MDEEEHKDHQEEEDPHHFAFSDNYSEAVLGGEISATVFDVTGKVVHVAHKMTKYEFLLEHGLYPRDLRNIDPSPVSIIPSILARGRKGAGRCILVNLLHIKALILHDKVLIFDTHSKNKSDTHRLGMFLYELENKLKPTINPEKMHTDMTVLPFELRVLEAILVNVMTTLDGELQVHLKTLNEILVGLEDHVDREQLKELLIGNKNVSRFYQKAVLIRDVLEELLESDDDLQQLYLGTHPKEGLAEVELLIESYCKQADEIVQQASNVRSHIRSTEEIVNIIVDANRNALMLLELKVTIVTVGFAVGAFVAALYGMNLENFIEETNEGMVLVVGVACLGGLLVTWFNLTKLHKTQKIAMFSNAATHTASKPYMLQWIIGLLRRKRTKSRFDNIDMSRPKMKGKKSNILHQLTKMTGKRR</sequence>
<name>MRS2_YARLI</name>
<comment type="function">
    <text evidence="1">High-conductance magnesium-selective channel that mediates the influx of magnesium into the mitochondrial matrix. Essential for the splicing of mRNA group II introns in mitochondria by affecting mitochondrial magnesium concentrations, which are critical for group II intron splicing. It also suppresses a variety of mitochondrial intron mutations and its absence may disturb the assembly of mitochondrial membrane complexes.</text>
</comment>
<comment type="subunit">
    <text evidence="1">Homopentamer. Forms homooligomers. Interacts with MFM1.</text>
</comment>
<comment type="subcellular location">
    <subcellularLocation>
        <location evidence="1">Mitochondrion inner membrane</location>
        <topology evidence="1">Multi-pass membrane protein</topology>
    </subcellularLocation>
</comment>
<comment type="similarity">
    <text evidence="3">Belongs to the CorA metal ion transporter (MIT) (TC 1.A.35) family.</text>
</comment>
<dbReference type="EMBL" id="CR382132">
    <property type="protein sequence ID" value="CAG77877.1"/>
    <property type="molecule type" value="Genomic_DNA"/>
</dbReference>
<dbReference type="RefSeq" id="XP_505070.1">
    <property type="nucleotide sequence ID" value="XM_505070.1"/>
</dbReference>
<dbReference type="SMR" id="Q6C2P2"/>
<dbReference type="EnsemblFungi" id="CAG77877">
    <property type="protein sequence ID" value="CAG77877"/>
    <property type="gene ID" value="YALI0_F06248g"/>
</dbReference>
<dbReference type="KEGG" id="yli:2908419"/>
<dbReference type="VEuPathDB" id="FungiDB:YALI0_F06248g"/>
<dbReference type="HOGENOM" id="CLU_025144_1_0_1"/>
<dbReference type="InParanoid" id="Q6C2P2"/>
<dbReference type="OMA" id="FDYPSGF"/>
<dbReference type="OrthoDB" id="19356at4891"/>
<dbReference type="Proteomes" id="UP000001300">
    <property type="component" value="Chromosome F"/>
</dbReference>
<dbReference type="GO" id="GO:0005743">
    <property type="term" value="C:mitochondrial inner membrane"/>
    <property type="evidence" value="ECO:0000318"/>
    <property type="project" value="GO_Central"/>
</dbReference>
<dbReference type="GO" id="GO:1901612">
    <property type="term" value="F:cardiolipin binding"/>
    <property type="evidence" value="ECO:0007669"/>
    <property type="project" value="EnsemblFungi"/>
</dbReference>
<dbReference type="GO" id="GO:0015095">
    <property type="term" value="F:magnesium ion transmembrane transporter activity"/>
    <property type="evidence" value="ECO:0000318"/>
    <property type="project" value="GO_Central"/>
</dbReference>
<dbReference type="GO" id="GO:0045016">
    <property type="term" value="P:mitochondrial magnesium ion transmembrane transport"/>
    <property type="evidence" value="ECO:0000318"/>
    <property type="project" value="GO_Central"/>
</dbReference>
<dbReference type="CDD" id="cd12823">
    <property type="entry name" value="Mrs2_Mfm1p-like"/>
    <property type="match status" value="1"/>
</dbReference>
<dbReference type="Gene3D" id="2.40.128.330">
    <property type="match status" value="1"/>
</dbReference>
<dbReference type="Gene3D" id="1.20.58.340">
    <property type="entry name" value="Magnesium transport protein CorA, transmembrane region"/>
    <property type="match status" value="1"/>
</dbReference>
<dbReference type="InterPro" id="IPR039204">
    <property type="entry name" value="MRS2-like"/>
</dbReference>
<dbReference type="PANTHER" id="PTHR13890:SF27">
    <property type="entry name" value="MAGNESIUM TRANSPORTER MRS2, MITOCHONDRIAL"/>
    <property type="match status" value="1"/>
</dbReference>
<dbReference type="PANTHER" id="PTHR13890">
    <property type="entry name" value="RNA SPLICING PROTEIN MRS2, MITOCHONDRIAL"/>
    <property type="match status" value="1"/>
</dbReference>
<dbReference type="Pfam" id="PF22099">
    <property type="entry name" value="MRS2-like"/>
    <property type="match status" value="1"/>
</dbReference>
<evidence type="ECO:0000250" key="1">
    <source>
        <dbReference type="UniProtKB" id="Q01926"/>
    </source>
</evidence>
<evidence type="ECO:0000255" key="2"/>
<evidence type="ECO:0000305" key="3"/>
<organism>
    <name type="scientific">Yarrowia lipolytica (strain CLIB 122 / E 150)</name>
    <name type="common">Yeast</name>
    <name type="synonym">Candida lipolytica</name>
    <dbReference type="NCBI Taxonomy" id="284591"/>
    <lineage>
        <taxon>Eukaryota</taxon>
        <taxon>Fungi</taxon>
        <taxon>Dikarya</taxon>
        <taxon>Ascomycota</taxon>
        <taxon>Saccharomycotina</taxon>
        <taxon>Dipodascomycetes</taxon>
        <taxon>Dipodascales</taxon>
        <taxon>Dipodascales incertae sedis</taxon>
        <taxon>Yarrowia</taxon>
    </lineage>
</organism>